<name>DHP2_ECOLX</name>
<accession>P0AC11</accession>
<accession>P19539</accession>
<sequence length="271" mass="28470">MNKSLIIFGIVNITSDSFSDGGRYLAPDAAIAQARKLMAEGADVIDLGPASSNPDAAPVSSDTEIARIAPVLDALKADGIPVSLDSYQPATQAYALSRGVAYLNDIRGFPDAAFYPQLAKSSAKLVVMHSVQDGQADRREAPAGDIMDHIAAFFDARIAALTGAGIKRNRLVLDPGMGFFLGAAPETSLSVLARFDELRLRFDLPVLLSVSRKSFLRALTGRGPGDVGAATLAAELAAAAGGADFIRTHEPRPLRDGLAVLAALKETARIR</sequence>
<gene>
    <name evidence="6" type="primary">sul2</name>
    <name evidence="5" type="synonym">sulII</name>
</gene>
<feature type="chain" id="PRO_0000168203" description="Dihydropteroate synthase type-2">
    <location>
        <begin position="1"/>
        <end position="271"/>
    </location>
</feature>
<feature type="domain" description="Pterin-binding" evidence="3">
    <location>
        <begin position="1"/>
        <end position="259"/>
    </location>
</feature>
<feature type="binding site" evidence="4 9">
    <location>
        <position position="12"/>
    </location>
    <ligand>
        <name>4-aminobenzoate</name>
        <dbReference type="ChEBI" id="CHEBI:17836"/>
    </ligand>
</feature>
<feature type="binding site" evidence="4 9">
    <location>
        <position position="12"/>
    </location>
    <ligand>
        <name>diphosphate</name>
        <dbReference type="ChEBI" id="CHEBI:33019"/>
    </ligand>
</feature>
<feature type="binding site" evidence="4 9">
    <location>
        <position position="12"/>
    </location>
    <ligand>
        <name>Mg(2+)</name>
        <dbReference type="ChEBI" id="CHEBI:18420"/>
    </ligand>
</feature>
<feature type="binding site" evidence="4 9">
    <location>
        <position position="18"/>
    </location>
    <ligand>
        <name>diphosphate</name>
        <dbReference type="ChEBI" id="CHEBI:33019"/>
    </ligand>
</feature>
<feature type="binding site" evidence="4 9">
    <location>
        <position position="51"/>
    </location>
    <ligand>
        <name>diphosphate</name>
        <dbReference type="ChEBI" id="CHEBI:33019"/>
    </ligand>
</feature>
<feature type="binding site" evidence="4 9">
    <location>
        <position position="52"/>
    </location>
    <ligand>
        <name>7,8-dihydropteroate</name>
        <dbReference type="ChEBI" id="CHEBI:17839"/>
    </ligand>
</feature>
<feature type="binding site" evidence="4 9">
    <location>
        <position position="52"/>
    </location>
    <ligand>
        <name>diphosphate</name>
        <dbReference type="ChEBI" id="CHEBI:33019"/>
    </ligand>
</feature>
<feature type="binding site" evidence="2">
    <location>
        <position position="85"/>
    </location>
    <ligand>
        <name>(7,8-dihydropterin-6-yl)methyl diphosphate</name>
        <dbReference type="ChEBI" id="CHEBI:72950"/>
    </ligand>
</feature>
<feature type="binding site" evidence="4 9">
    <location>
        <position position="85"/>
    </location>
    <ligand>
        <name>7,8-dihydropteroate</name>
        <dbReference type="ChEBI" id="CHEBI:17839"/>
    </ligand>
</feature>
<feature type="binding site" evidence="2">
    <location>
        <position position="104"/>
    </location>
    <ligand>
        <name>(7,8-dihydropterin-6-yl)methyl diphosphate</name>
        <dbReference type="ChEBI" id="CHEBI:72950"/>
    </ligand>
</feature>
<feature type="binding site" evidence="1">
    <location>
        <position position="104"/>
    </location>
    <ligand>
        <name>6-hydroxymethyl-7,8-dihydropterin</name>
        <dbReference type="ChEBI" id="CHEBI:44841"/>
    </ligand>
</feature>
<feature type="binding site" evidence="4 9">
    <location>
        <position position="104"/>
    </location>
    <ligand>
        <name>7,8-dihydropteroate</name>
        <dbReference type="ChEBI" id="CHEBI:17839"/>
    </ligand>
</feature>
<feature type="binding site" evidence="2">
    <location>
        <position position="174"/>
    </location>
    <ligand>
        <name>(7,8-dihydropterin-6-yl)methyl diphosphate</name>
        <dbReference type="ChEBI" id="CHEBI:72950"/>
    </ligand>
</feature>
<feature type="binding site" evidence="1">
    <location>
        <position position="174"/>
    </location>
    <ligand>
        <name>6-hydroxymethyl-7,8-dihydropterin</name>
        <dbReference type="ChEBI" id="CHEBI:44841"/>
    </ligand>
</feature>
<feature type="binding site" evidence="4 9">
    <location>
        <position position="174"/>
    </location>
    <ligand>
        <name>7,8-dihydropteroate</name>
        <dbReference type="ChEBI" id="CHEBI:17839"/>
    </ligand>
</feature>
<feature type="binding site" evidence="4 9">
    <location>
        <position position="179"/>
    </location>
    <ligand>
        <name>7,8-dihydropteroate</name>
        <dbReference type="ChEBI" id="CHEBI:17839"/>
    </ligand>
</feature>
<feature type="binding site" evidence="2">
    <location>
        <position position="213"/>
    </location>
    <ligand>
        <name>(7,8-dihydropterin-6-yl)methyl diphosphate</name>
        <dbReference type="ChEBI" id="CHEBI:72950"/>
    </ligand>
</feature>
<feature type="binding site" evidence="1">
    <location>
        <position position="213"/>
    </location>
    <ligand>
        <name>6-hydroxymethyl-7,8-dihydropterin</name>
        <dbReference type="ChEBI" id="CHEBI:44841"/>
    </ligand>
</feature>
<feature type="binding site" evidence="4 9">
    <location>
        <position position="213"/>
    </location>
    <ligand>
        <name>7,8-dihydropteroate</name>
        <dbReference type="ChEBI" id="CHEBI:17839"/>
    </ligand>
</feature>
<feature type="binding site" evidence="4 9">
    <location>
        <position position="214"/>
    </location>
    <ligand>
        <name>7,8-dihydropteroate</name>
        <dbReference type="ChEBI" id="CHEBI:17839"/>
    </ligand>
</feature>
<feature type="binding site" evidence="2">
    <location>
        <begin position="247"/>
        <end position="249"/>
    </location>
    <ligand>
        <name>(7,8-dihydropterin-6-yl)methyl diphosphate</name>
        <dbReference type="ChEBI" id="CHEBI:72950"/>
    </ligand>
</feature>
<feature type="binding site" evidence="4 9">
    <location>
        <position position="247"/>
    </location>
    <ligand>
        <name>4-aminobenzoate</name>
        <dbReference type="ChEBI" id="CHEBI:17836"/>
    </ligand>
</feature>
<feature type="binding site" evidence="4 9">
    <location>
        <position position="247"/>
    </location>
    <ligand>
        <name>diphosphate</name>
        <dbReference type="ChEBI" id="CHEBI:33019"/>
    </ligand>
</feature>
<feature type="binding site" evidence="4 9">
    <location>
        <position position="249"/>
    </location>
    <ligand>
        <name>diphosphate</name>
        <dbReference type="ChEBI" id="CHEBI:33019"/>
    </ligand>
</feature>
<feature type="mutagenesis site" description="Reduces ability to complement folP deletion mutation in E.coli strain BW25113." evidence="4">
    <original>F</original>
    <variation>G</variation>
    <location>
        <position position="179"/>
    </location>
</feature>
<feature type="mutagenesis site" description="Drastically reduces ability to complement folP deletion mutation in E.coli strain BW25113." evidence="4">
    <location>
        <position position="179"/>
    </location>
</feature>
<feature type="strand" evidence="11">
    <location>
        <begin position="6"/>
        <end position="12"/>
    </location>
</feature>
<feature type="turn" evidence="11">
    <location>
        <begin position="18"/>
        <end position="24"/>
    </location>
</feature>
<feature type="helix" evidence="11">
    <location>
        <begin position="27"/>
        <end position="39"/>
    </location>
</feature>
<feature type="strand" evidence="11">
    <location>
        <begin position="43"/>
        <end position="50"/>
    </location>
</feature>
<feature type="helix" evidence="11">
    <location>
        <begin position="61"/>
        <end position="78"/>
    </location>
</feature>
<feature type="strand" evidence="11">
    <location>
        <begin position="82"/>
        <end position="85"/>
    </location>
</feature>
<feature type="helix" evidence="11">
    <location>
        <begin position="89"/>
        <end position="97"/>
    </location>
</feature>
<feature type="strand" evidence="11">
    <location>
        <begin position="101"/>
        <end position="105"/>
    </location>
</feature>
<feature type="helix" evidence="11">
    <location>
        <begin position="112"/>
        <end position="114"/>
    </location>
</feature>
<feature type="helix" evidence="11">
    <location>
        <begin position="115"/>
        <end position="120"/>
    </location>
</feature>
<feature type="strand" evidence="11">
    <location>
        <begin position="124"/>
        <end position="128"/>
    </location>
</feature>
<feature type="strand" evidence="11">
    <location>
        <begin position="131"/>
        <end position="135"/>
    </location>
</feature>
<feature type="helix" evidence="11">
    <location>
        <begin position="146"/>
        <end position="163"/>
    </location>
</feature>
<feature type="helix" evidence="11">
    <location>
        <begin position="168"/>
        <end position="170"/>
    </location>
</feature>
<feature type="strand" evidence="11">
    <location>
        <begin position="171"/>
        <end position="174"/>
    </location>
</feature>
<feature type="helix" evidence="11">
    <location>
        <begin position="178"/>
        <end position="181"/>
    </location>
</feature>
<feature type="helix" evidence="11">
    <location>
        <begin position="185"/>
        <end position="194"/>
    </location>
</feature>
<feature type="helix" evidence="11">
    <location>
        <begin position="196"/>
        <end position="202"/>
    </location>
</feature>
<feature type="strand" evidence="11">
    <location>
        <begin position="206"/>
        <end position="208"/>
    </location>
</feature>
<feature type="helix" evidence="11">
    <location>
        <begin position="214"/>
        <end position="220"/>
    </location>
</feature>
<feature type="helix" evidence="10">
    <location>
        <begin position="224"/>
        <end position="226"/>
    </location>
</feature>
<feature type="helix" evidence="11">
    <location>
        <begin position="228"/>
        <end position="240"/>
    </location>
</feature>
<feature type="strand" evidence="11">
    <location>
        <begin position="244"/>
        <end position="249"/>
    </location>
</feature>
<feature type="helix" evidence="11">
    <location>
        <begin position="251"/>
        <end position="268"/>
    </location>
</feature>
<organism>
    <name type="scientific">Escherichia coli</name>
    <dbReference type="NCBI Taxonomy" id="562"/>
    <lineage>
        <taxon>Bacteria</taxon>
        <taxon>Pseudomonadati</taxon>
        <taxon>Pseudomonadota</taxon>
        <taxon>Gammaproteobacteria</taxon>
        <taxon>Enterobacterales</taxon>
        <taxon>Enterobacteriaceae</taxon>
        <taxon>Escherichia</taxon>
    </lineage>
</organism>
<evidence type="ECO:0000250" key="1">
    <source>
        <dbReference type="UniProtKB" id="C0HMD9"/>
    </source>
</evidence>
<evidence type="ECO:0000250" key="2">
    <source>
        <dbReference type="UniProtKB" id="P0AC13"/>
    </source>
</evidence>
<evidence type="ECO:0000255" key="3">
    <source>
        <dbReference type="PROSITE-ProRule" id="PRU00334"/>
    </source>
</evidence>
<evidence type="ECO:0000269" key="4">
    <source>
    </source>
</evidence>
<evidence type="ECO:0000303" key="5">
    <source>
    </source>
</evidence>
<evidence type="ECO:0000303" key="6">
    <source>
    </source>
</evidence>
<evidence type="ECO:0000305" key="7"/>
<evidence type="ECO:0007744" key="8">
    <source>
        <dbReference type="PDB" id="7S2J"/>
    </source>
</evidence>
<evidence type="ECO:0007744" key="9">
    <source>
        <dbReference type="PDB" id="7S2K"/>
    </source>
</evidence>
<evidence type="ECO:0007829" key="10">
    <source>
        <dbReference type="PDB" id="7S2J"/>
    </source>
</evidence>
<evidence type="ECO:0007829" key="11">
    <source>
        <dbReference type="PDB" id="7S2K"/>
    </source>
</evidence>
<geneLocation type="plasmid">
    <name>pGS05</name>
</geneLocation>
<geneLocation type="plasmid">
    <name>pGS03B</name>
</geneLocation>
<geneLocation type="plasmid">
    <name>IncQ RSF1010</name>
</geneLocation>
<keyword id="KW-0002">3D-structure</keyword>
<keyword id="KW-0046">Antibiotic resistance</keyword>
<keyword id="KW-0289">Folate biosynthesis</keyword>
<keyword id="KW-0460">Magnesium</keyword>
<keyword id="KW-0479">Metal-binding</keyword>
<keyword id="KW-0614">Plasmid</keyword>
<keyword id="KW-0808">Transferase</keyword>
<reference key="1">
    <citation type="journal article" date="1988" name="Antimicrob. Agents Chemother.">
        <title>RSF1010 and a conjugative plasmid contain sulII, one of two known genes for plasmid-borne sulfonamide resistance dihydropteroate synthase.</title>
        <authorList>
            <person name="Raedstroem P."/>
            <person name="Swedberg G."/>
        </authorList>
    </citation>
    <scope>NUCLEOTIDE SEQUENCE [GENOMIC DNA]</scope>
    <source>
        <plasmid>IncQ RSF1010</plasmid>
        <plasmid>pGS03B</plasmid>
        <plasmid>pGS05</plasmid>
    </source>
</reference>
<reference evidence="8 9" key="2">
    <citation type="journal article" date="2023" name="Nat. Commun.">
        <title>Molecular mechanism of plasmid-borne resistance to sulfonamide antibiotics.</title>
        <authorList>
            <person name="Venkatesan M."/>
            <person name="Fruci M."/>
            <person name="Verellen L.A."/>
            <person name="Skarina T."/>
            <person name="Mesa N."/>
            <person name="Flick R."/>
            <person name="Pham C."/>
            <person name="Mahadevan R."/>
            <person name="Stogios P.J."/>
            <person name="Savchenko A."/>
        </authorList>
    </citation>
    <scope>X-RAY CRYSTALLOGRAPHY (1.74 ANGSTROMS) IN APO FORM AND IN COMPLEX WITH MG(2+) AND SUBSTRATE AND PRODUCTS</scope>
    <scope>FUNCTION</scope>
    <scope>CATALYTIC ACTIVITY</scope>
    <scope>BIOPHYSICOCHEMICAL PROPERTIES</scope>
    <scope>MUTAGENESIS OF PHE-179</scope>
</reference>
<protein>
    <recommendedName>
        <fullName>Dihydropteroate synthase type-2</fullName>
        <ecNumber evidence="4">2.5.1.15</ecNumber>
    </recommendedName>
    <alternativeName>
        <fullName>Dihydropteroate pyrophosphorylase type II</fullName>
    </alternativeName>
    <alternativeName>
        <fullName>Dihydropteroate synthase type II</fullName>
        <shortName>DHPS</shortName>
    </alternativeName>
</protein>
<proteinExistence type="evidence at protein level"/>
<comment type="function">
    <text evidence="2 4">Catalyzes the condensation of para-aminobenzoate (pABA) with 6-hydroxymethyl-7,8-dihydropterin diphosphate (DHPt-PP) to form 7,8-dihydropteroate (H2Pte), the immediate precursor of folate derivatives (PubMed:37419898). Confers resistance to sulfonamide antibiotics, including sulfamethoxazole (SMX), sulfadiazine and sulfisoxazole (PubMed:37419898). The type II enzyme is stable whereas type I DHPS loses its activity rapidly (By similarity).</text>
</comment>
<comment type="catalytic activity">
    <reaction evidence="4">
        <text>(7,8-dihydropterin-6-yl)methyl diphosphate + 4-aminobenzoate = 7,8-dihydropteroate + diphosphate</text>
        <dbReference type="Rhea" id="RHEA:19949"/>
        <dbReference type="ChEBI" id="CHEBI:17836"/>
        <dbReference type="ChEBI" id="CHEBI:17839"/>
        <dbReference type="ChEBI" id="CHEBI:33019"/>
        <dbReference type="ChEBI" id="CHEBI:72950"/>
        <dbReference type="EC" id="2.5.1.15"/>
    </reaction>
</comment>
<comment type="cofactor">
    <cofactor evidence="2">
        <name>Mg(2+)</name>
        <dbReference type="ChEBI" id="CHEBI:18420"/>
    </cofactor>
</comment>
<comment type="biophysicochemical properties">
    <kinetics>
        <KM evidence="4">9.63 uM for 4-aminobenzoate (at pH 7.5 and 37 degrees Celsius)</KM>
        <KM evidence="4">800 uM for sulfamethoxazole (at pH 7.5 and 37 degrees Celsius)</KM>
        <text evidence="4">kcat is 0.46 sec(-1) for 4-aminobenzoate as substrate (at pH 7.5 and 37 degrees Celsius) (PubMed:37419898). kcat is 0.28 sec(-1) for sulfamethoxazole as substrate (at pH 7.5 and 37 degrees Celsius) (PubMed:37419898).</text>
    </kinetics>
</comment>
<comment type="pathway">
    <text>Cofactor biosynthesis; tetrahydrofolate biosynthesis; 7,8-dihydrofolate from 2-amino-4-hydroxy-6-hydroxymethyl-7,8-dihydropteridine diphosphate and 4-aminobenzoate: step 1/2.</text>
</comment>
<comment type="subunit">
    <text evidence="7">Homodimer.</text>
</comment>
<comment type="miscellaneous">
    <text>The sulII gene is located on various IncQ (Broad-host-range) plasmids and other small non-conjugative resistance plasmids.</text>
</comment>
<comment type="similarity">
    <text evidence="7">Belongs to the DHPS family.</text>
</comment>
<dbReference type="EC" id="2.5.1.15" evidence="4"/>
<dbReference type="EMBL" id="M36657">
    <property type="protein sequence ID" value="AAA24936.1"/>
    <property type="molecule type" value="Genomic_DNA"/>
</dbReference>
<dbReference type="PIR" id="A34950">
    <property type="entry name" value="A34950"/>
</dbReference>
<dbReference type="RefSeq" id="NP_957531.1">
    <property type="nucleotide sequence ID" value="NC_005324.1"/>
</dbReference>
<dbReference type="RefSeq" id="YP_002455756.1">
    <property type="nucleotide sequence ID" value="NC_011795.1"/>
</dbReference>
<dbReference type="RefSeq" id="YP_002891091.1">
    <property type="nucleotide sequence ID" value="NC_012690.1"/>
</dbReference>
<dbReference type="RefSeq" id="YP_002894395.1">
    <property type="nucleotide sequence ID" value="NC_012692.1"/>
</dbReference>
<dbReference type="RefSeq" id="YP_002995721.1">
    <property type="nucleotide sequence ID" value="NC_012886.1"/>
</dbReference>
<dbReference type="RefSeq" id="YP_006940094.1">
    <property type="nucleotide sequence ID" value="NC_018995.1"/>
</dbReference>
<dbReference type="RefSeq" id="YP_006952281.1">
    <property type="nucleotide sequence ID" value="NC_019060.1"/>
</dbReference>
<dbReference type="RefSeq" id="YP_006952747.1">
    <property type="nucleotide sequence ID" value="NC_019065.1"/>
</dbReference>
<dbReference type="RefSeq" id="YP_006952891.1">
    <property type="nucleotide sequence ID" value="NC_019066.1"/>
</dbReference>
<dbReference type="RefSeq" id="YP_006953258.1">
    <property type="nucleotide sequence ID" value="NC_019070.1"/>
</dbReference>
<dbReference type="RefSeq" id="YP_006953602.1">
    <property type="nucleotide sequence ID" value="NC_019080.1"/>
</dbReference>
<dbReference type="RefSeq" id="YP_007349479.1">
    <property type="nucleotide sequence ID" value="NC_020086.1"/>
</dbReference>
<dbReference type="RefSeq" id="YP_008574999.1">
    <property type="nucleotide sequence ID" value="NC_022377.1"/>
</dbReference>
<dbReference type="RefSeq" id="YP_009061414.1">
    <property type="nucleotide sequence ID" value="NC_024978.1"/>
</dbReference>
<dbReference type="RefSeq" id="YP_009061550.1">
    <property type="nucleotide sequence ID" value="NC_024979.1"/>
</dbReference>
<dbReference type="RefSeq" id="YP_009061670.1">
    <property type="nucleotide sequence ID" value="NC_024980.1"/>
</dbReference>
<dbReference type="RefSeq" id="YP_009068735.1">
    <property type="nucleotide sequence ID" value="NC_025142.1"/>
</dbReference>
<dbReference type="RefSeq" id="YP_009068851.1">
    <property type="nucleotide sequence ID" value="NC_025143.1"/>
</dbReference>
<dbReference type="RefSeq" id="YP_009069120.1">
    <property type="nucleotide sequence ID" value="NC_025144.1"/>
</dbReference>
<dbReference type="RefSeq" id="YP_009070858.1">
    <property type="nucleotide sequence ID" value="NC_025176.1"/>
</dbReference>
<dbReference type="RefSeq" id="YP_794145.1">
    <property type="nucleotide sequence ID" value="NC_008490.1"/>
</dbReference>
<dbReference type="RefSeq" id="YP_891140.1">
    <property type="nucleotide sequence ID" value="NC_008597.1"/>
</dbReference>
<dbReference type="PDB" id="7S2J">
    <property type="method" value="X-ray"/>
    <property type="resolution" value="1.85 A"/>
    <property type="chains" value="A/B/C/D=1-271"/>
</dbReference>
<dbReference type="PDB" id="7S2K">
    <property type="method" value="X-ray"/>
    <property type="resolution" value="1.74 A"/>
    <property type="chains" value="A/B=1-271"/>
</dbReference>
<dbReference type="PDBsum" id="7S2J"/>
<dbReference type="PDBsum" id="7S2K"/>
<dbReference type="SMR" id="P0AC11"/>
<dbReference type="OMA" id="DLVNTGW"/>
<dbReference type="UniPathway" id="UPA00077">
    <property type="reaction ID" value="UER00156"/>
</dbReference>
<dbReference type="GO" id="GO:0005829">
    <property type="term" value="C:cytosol"/>
    <property type="evidence" value="ECO:0007669"/>
    <property type="project" value="TreeGrafter"/>
</dbReference>
<dbReference type="GO" id="GO:0004156">
    <property type="term" value="F:dihydropteroate synthase activity"/>
    <property type="evidence" value="ECO:0007669"/>
    <property type="project" value="UniProtKB-EC"/>
</dbReference>
<dbReference type="GO" id="GO:0046872">
    <property type="term" value="F:metal ion binding"/>
    <property type="evidence" value="ECO:0007669"/>
    <property type="project" value="UniProtKB-KW"/>
</dbReference>
<dbReference type="GO" id="GO:0046656">
    <property type="term" value="P:folic acid biosynthetic process"/>
    <property type="evidence" value="ECO:0007669"/>
    <property type="project" value="UniProtKB-KW"/>
</dbReference>
<dbReference type="GO" id="GO:0046677">
    <property type="term" value="P:response to antibiotic"/>
    <property type="evidence" value="ECO:0007669"/>
    <property type="project" value="UniProtKB-KW"/>
</dbReference>
<dbReference type="GO" id="GO:0046654">
    <property type="term" value="P:tetrahydrofolate biosynthetic process"/>
    <property type="evidence" value="ECO:0007669"/>
    <property type="project" value="UniProtKB-UniPathway"/>
</dbReference>
<dbReference type="CDD" id="cd00739">
    <property type="entry name" value="DHPS"/>
    <property type="match status" value="1"/>
</dbReference>
<dbReference type="Gene3D" id="3.20.20.20">
    <property type="entry name" value="Dihydropteroate synthase-like"/>
    <property type="match status" value="1"/>
</dbReference>
<dbReference type="InterPro" id="IPR045031">
    <property type="entry name" value="DHP_synth-like"/>
</dbReference>
<dbReference type="InterPro" id="IPR006390">
    <property type="entry name" value="DHP_synth_dom"/>
</dbReference>
<dbReference type="InterPro" id="IPR011005">
    <property type="entry name" value="Dihydropteroate_synth-like_sf"/>
</dbReference>
<dbReference type="InterPro" id="IPR000489">
    <property type="entry name" value="Pterin-binding_dom"/>
</dbReference>
<dbReference type="NCBIfam" id="TIGR01496">
    <property type="entry name" value="DHPS"/>
    <property type="match status" value="1"/>
</dbReference>
<dbReference type="NCBIfam" id="NF000295">
    <property type="entry name" value="Sul2"/>
    <property type="match status" value="1"/>
</dbReference>
<dbReference type="PANTHER" id="PTHR20941">
    <property type="entry name" value="FOLATE SYNTHESIS PROTEINS"/>
    <property type="match status" value="1"/>
</dbReference>
<dbReference type="PANTHER" id="PTHR20941:SF1">
    <property type="entry name" value="FOLIC ACID SYNTHESIS PROTEIN FOL1"/>
    <property type="match status" value="1"/>
</dbReference>
<dbReference type="Pfam" id="PF00809">
    <property type="entry name" value="Pterin_bind"/>
    <property type="match status" value="1"/>
</dbReference>
<dbReference type="SUPFAM" id="SSF51717">
    <property type="entry name" value="Dihydropteroate synthetase-like"/>
    <property type="match status" value="1"/>
</dbReference>
<dbReference type="PROSITE" id="PS00792">
    <property type="entry name" value="DHPS_1"/>
    <property type="match status" value="1"/>
</dbReference>
<dbReference type="PROSITE" id="PS00793">
    <property type="entry name" value="DHPS_2"/>
    <property type="match status" value="1"/>
</dbReference>
<dbReference type="PROSITE" id="PS50972">
    <property type="entry name" value="PTERIN_BINDING"/>
    <property type="match status" value="1"/>
</dbReference>